<keyword id="KW-0067">ATP-binding</keyword>
<keyword id="KW-0963">Cytoplasm</keyword>
<keyword id="KW-0418">Kinase</keyword>
<keyword id="KW-0547">Nucleotide-binding</keyword>
<keyword id="KW-0665">Pyrimidine biosynthesis</keyword>
<keyword id="KW-1185">Reference proteome</keyword>
<keyword id="KW-0808">Transferase</keyword>
<reference key="1">
    <citation type="journal article" date="2006" name="BMC Genomics">
        <title>The genome of the square archaeon Haloquadratum walsbyi: life at the limits of water activity.</title>
        <authorList>
            <person name="Bolhuis H."/>
            <person name="Palm P."/>
            <person name="Wende A."/>
            <person name="Falb M."/>
            <person name="Rampp M."/>
            <person name="Rodriguez-Valera F."/>
            <person name="Pfeiffer F."/>
            <person name="Oesterhelt D."/>
        </authorList>
    </citation>
    <scope>NUCLEOTIDE SEQUENCE [LARGE SCALE GENOMIC DNA]</scope>
    <source>
        <strain>DSM 16790 / HBSQ001</strain>
    </source>
</reference>
<dbReference type="EC" id="2.7.4.22" evidence="1"/>
<dbReference type="EMBL" id="AM180088">
    <property type="protein sequence ID" value="CAJ51228.1"/>
    <property type="molecule type" value="Genomic_DNA"/>
</dbReference>
<dbReference type="RefSeq" id="WP_011570394.1">
    <property type="nucleotide sequence ID" value="NC_008212.1"/>
</dbReference>
<dbReference type="SMR" id="Q18DR1"/>
<dbReference type="STRING" id="362976.HQ_1098A"/>
<dbReference type="GeneID" id="4194553"/>
<dbReference type="KEGG" id="hwa:HQ_1098A"/>
<dbReference type="eggNOG" id="arCOG00858">
    <property type="taxonomic scope" value="Archaea"/>
</dbReference>
<dbReference type="HOGENOM" id="CLU_079546_0_0_2"/>
<dbReference type="UniPathway" id="UPA00159">
    <property type="reaction ID" value="UER00275"/>
</dbReference>
<dbReference type="Proteomes" id="UP000001975">
    <property type="component" value="Chromosome"/>
</dbReference>
<dbReference type="GO" id="GO:0005737">
    <property type="term" value="C:cytoplasm"/>
    <property type="evidence" value="ECO:0007669"/>
    <property type="project" value="UniProtKB-SubCell"/>
</dbReference>
<dbReference type="GO" id="GO:0005524">
    <property type="term" value="F:ATP binding"/>
    <property type="evidence" value="ECO:0007669"/>
    <property type="project" value="UniProtKB-KW"/>
</dbReference>
<dbReference type="GO" id="GO:0033862">
    <property type="term" value="F:UMP kinase activity"/>
    <property type="evidence" value="ECO:0007669"/>
    <property type="project" value="UniProtKB-EC"/>
</dbReference>
<dbReference type="GO" id="GO:0044210">
    <property type="term" value="P:'de novo' CTP biosynthetic process"/>
    <property type="evidence" value="ECO:0007669"/>
    <property type="project" value="UniProtKB-UniRule"/>
</dbReference>
<dbReference type="GO" id="GO:0006225">
    <property type="term" value="P:UDP biosynthetic process"/>
    <property type="evidence" value="ECO:0007669"/>
    <property type="project" value="TreeGrafter"/>
</dbReference>
<dbReference type="Gene3D" id="3.40.1160.10">
    <property type="entry name" value="Acetylglutamate kinase-like"/>
    <property type="match status" value="1"/>
</dbReference>
<dbReference type="HAMAP" id="MF_01220_A">
    <property type="entry name" value="PyrH_A"/>
    <property type="match status" value="1"/>
</dbReference>
<dbReference type="InterPro" id="IPR036393">
    <property type="entry name" value="AceGlu_kinase-like_sf"/>
</dbReference>
<dbReference type="InterPro" id="IPR001048">
    <property type="entry name" value="Asp/Glu/Uridylate_kinase"/>
</dbReference>
<dbReference type="InterPro" id="IPR011817">
    <property type="entry name" value="Uridylate_kinase"/>
</dbReference>
<dbReference type="InterPro" id="IPR011818">
    <property type="entry name" value="Uridylate_kinase_arch/spir"/>
</dbReference>
<dbReference type="NCBIfam" id="TIGR02076">
    <property type="entry name" value="pyrH_arch"/>
    <property type="match status" value="1"/>
</dbReference>
<dbReference type="PANTHER" id="PTHR42833">
    <property type="entry name" value="URIDYLATE KINASE"/>
    <property type="match status" value="1"/>
</dbReference>
<dbReference type="PANTHER" id="PTHR42833:SF4">
    <property type="entry name" value="URIDYLATE KINASE PUMPKIN, CHLOROPLASTIC"/>
    <property type="match status" value="1"/>
</dbReference>
<dbReference type="Pfam" id="PF00696">
    <property type="entry name" value="AA_kinase"/>
    <property type="match status" value="1"/>
</dbReference>
<dbReference type="PIRSF" id="PIRSF005650">
    <property type="entry name" value="Uridylate_kin"/>
    <property type="match status" value="1"/>
</dbReference>
<dbReference type="SUPFAM" id="SSF53633">
    <property type="entry name" value="Carbamate kinase-like"/>
    <property type="match status" value="1"/>
</dbReference>
<proteinExistence type="inferred from homology"/>
<accession>Q18DR1</accession>
<organism>
    <name type="scientific">Haloquadratum walsbyi (strain DSM 16790 / HBSQ001)</name>
    <dbReference type="NCBI Taxonomy" id="362976"/>
    <lineage>
        <taxon>Archaea</taxon>
        <taxon>Methanobacteriati</taxon>
        <taxon>Methanobacteriota</taxon>
        <taxon>Stenosarchaea group</taxon>
        <taxon>Halobacteria</taxon>
        <taxon>Halobacteriales</taxon>
        <taxon>Haloferacaceae</taxon>
        <taxon>Haloquadratum</taxon>
    </lineage>
</organism>
<name>PYRH_HALWD</name>
<comment type="function">
    <text evidence="1">Catalyzes the reversible phosphorylation of UMP to UDP.</text>
</comment>
<comment type="catalytic activity">
    <reaction evidence="1">
        <text>UMP + ATP = UDP + ADP</text>
        <dbReference type="Rhea" id="RHEA:24400"/>
        <dbReference type="ChEBI" id="CHEBI:30616"/>
        <dbReference type="ChEBI" id="CHEBI:57865"/>
        <dbReference type="ChEBI" id="CHEBI:58223"/>
        <dbReference type="ChEBI" id="CHEBI:456216"/>
        <dbReference type="EC" id="2.7.4.22"/>
    </reaction>
</comment>
<comment type="activity regulation">
    <text evidence="1">Inhibited by UTP.</text>
</comment>
<comment type="pathway">
    <text evidence="1">Pyrimidine metabolism; CTP biosynthesis via de novo pathway; UDP from UMP (UMPK route): step 1/1.</text>
</comment>
<comment type="subunit">
    <text evidence="1">Homohexamer.</text>
</comment>
<comment type="subcellular location">
    <subcellularLocation>
        <location evidence="1">Cytoplasm</location>
    </subcellularLocation>
</comment>
<comment type="similarity">
    <text evidence="1">Belongs to the UMP kinase family.</text>
</comment>
<sequence length="241" mass="25151">MRVVVSIGGSVLAPNLDARRVEDHAAVVETLAEAGYDIAAVVGGGGVARDYIGTARDLGANEVQLDQIGIDVTRINARLLIAALGSRVDPKVARDYEDAGDAVRRGDISIMGGIMPGQTTDAVAAALAEYVDADLLVYATSVDGVYDADPSSQDEAQKYTQLLPTELVDVVAPMSRDAGASAPVDLLAAKLIQRAGMRTIVLDGADPQHIESAVLDGEHNGTDIIPPDGKDDLATWVHAEQ</sequence>
<evidence type="ECO:0000255" key="1">
    <source>
        <dbReference type="HAMAP-Rule" id="MF_01220"/>
    </source>
</evidence>
<feature type="chain" id="PRO_1000053933" description="Uridylate kinase">
    <location>
        <begin position="1"/>
        <end position="241"/>
    </location>
</feature>
<feature type="binding site" evidence="1">
    <location>
        <begin position="9"/>
        <end position="10"/>
    </location>
    <ligand>
        <name>ATP</name>
        <dbReference type="ChEBI" id="CHEBI:30616"/>
    </ligand>
</feature>
<feature type="binding site" evidence="1">
    <location>
        <position position="44"/>
    </location>
    <ligand>
        <name>UMP</name>
        <dbReference type="ChEBI" id="CHEBI:57865"/>
    </ligand>
</feature>
<feature type="binding site" evidence="1">
    <location>
        <position position="45"/>
    </location>
    <ligand>
        <name>ATP</name>
        <dbReference type="ChEBI" id="CHEBI:30616"/>
    </ligand>
</feature>
<feature type="binding site" evidence="1">
    <location>
        <position position="49"/>
    </location>
    <ligand>
        <name>ATP</name>
        <dbReference type="ChEBI" id="CHEBI:30616"/>
    </ligand>
</feature>
<feature type="binding site" evidence="1">
    <location>
        <position position="66"/>
    </location>
    <ligand>
        <name>UMP</name>
        <dbReference type="ChEBI" id="CHEBI:57865"/>
    </ligand>
</feature>
<feature type="binding site" evidence="1">
    <location>
        <begin position="114"/>
        <end position="120"/>
    </location>
    <ligand>
        <name>UMP</name>
        <dbReference type="ChEBI" id="CHEBI:57865"/>
    </ligand>
</feature>
<feature type="binding site" evidence="1">
    <location>
        <position position="140"/>
    </location>
    <ligand>
        <name>ATP</name>
        <dbReference type="ChEBI" id="CHEBI:30616"/>
    </ligand>
</feature>
<feature type="binding site" evidence="1">
    <location>
        <position position="146"/>
    </location>
    <ligand>
        <name>ATP</name>
        <dbReference type="ChEBI" id="CHEBI:30616"/>
    </ligand>
</feature>
<feature type="binding site" evidence="1">
    <location>
        <position position="149"/>
    </location>
    <ligand>
        <name>ATP</name>
        <dbReference type="ChEBI" id="CHEBI:30616"/>
    </ligand>
</feature>
<gene>
    <name evidence="1" type="primary">pyrH</name>
    <name type="ordered locus">HQ_1098A</name>
</gene>
<protein>
    <recommendedName>
        <fullName evidence="1">Uridylate kinase</fullName>
        <shortName evidence="1">UK</shortName>
        <ecNumber evidence="1">2.7.4.22</ecNumber>
    </recommendedName>
    <alternativeName>
        <fullName evidence="1">Uridine monophosphate kinase</fullName>
        <shortName evidence="1">UMP kinase</shortName>
        <shortName evidence="1">UMPK</shortName>
    </alternativeName>
</protein>